<comment type="function">
    <molecule>Snake venom metalloproteinase TJM-1</molecule>
    <text evidence="1">Impairs hemostasis in the envenomed animal.</text>
</comment>
<comment type="function">
    <molecule>Disintegrin jerdonin</molecule>
    <text evidence="6">Inhibits platelet aggregation induced by ADP and collagen. Acts by inhibiting fibrinogen interaction with platelet receptors GPIIb/GPIIIa (ITGA2B/ITGB3). Has antitumor-growth activity.</text>
</comment>
<comment type="cofactor">
    <cofactor evidence="1">
        <name>Zn(2+)</name>
        <dbReference type="ChEBI" id="CHEBI:29105"/>
    </cofactor>
    <text evidence="1">Binds 1 zinc ion per subunit.</text>
</comment>
<comment type="subunit">
    <text evidence="1">Monomer.</text>
</comment>
<comment type="subcellular location">
    <subcellularLocation>
        <location evidence="6">Secreted</location>
    </subcellularLocation>
</comment>
<comment type="tissue specificity">
    <text evidence="8">Expressed by the venom gland.</text>
</comment>
<comment type="mass spectrometry">
    <molecule>Disintegrin jerdonin</molecule>
</comment>
<comment type="miscellaneous">
    <text>The disintegrin belongs to the medium disintegrin subfamily.</text>
</comment>
<comment type="similarity">
    <text evidence="7">Belongs to the venom metalloproteinase (M12B) family. P-II subfamily. P-IIa sub-subfamily.</text>
</comment>
<keyword id="KW-0106">Calcium</keyword>
<keyword id="KW-1217">Cell adhesion impairing toxin</keyword>
<keyword id="KW-0903">Direct protein sequencing</keyword>
<keyword id="KW-1015">Disulfide bond</keyword>
<keyword id="KW-1199">Hemostasis impairing toxin</keyword>
<keyword id="KW-0378">Hydrolase</keyword>
<keyword id="KW-0479">Metal-binding</keyword>
<keyword id="KW-0482">Metalloprotease</keyword>
<keyword id="KW-1201">Platelet aggregation inhibiting toxin</keyword>
<keyword id="KW-0645">Protease</keyword>
<keyword id="KW-0964">Secreted</keyword>
<keyword id="KW-0732">Signal</keyword>
<keyword id="KW-0800">Toxin</keyword>
<keyword id="KW-0862">Zinc</keyword>
<keyword id="KW-0865">Zymogen</keyword>
<accession>Q7ZZS9</accession>
<proteinExistence type="evidence at protein level"/>
<reference key="1">
    <citation type="journal article" date="2004" name="Toxicon">
        <title>Purification, cloning and biological characterization of a novel disintegrin from Trimeresurus jerdonii venom.</title>
        <authorList>
            <person name="Zhou X.-D."/>
            <person name="Jin Y."/>
            <person name="Chen R.-Q."/>
            <person name="Lu Q.-M."/>
            <person name="Wu J.-B."/>
            <person name="Wang W.-Y."/>
            <person name="Xiong Y.-L."/>
        </authorList>
    </citation>
    <scope>NUCLEOTIDE SEQUENCE [MRNA]</scope>
    <scope>PROTEIN SEQUENCE OF 411-435</scope>
    <scope>FUNCTION</scope>
    <scope>MASS SPECTROMETRY</scope>
    <scope>SUBCELLULAR LOCATION</scope>
    <source>
        <tissue>Venom</tissue>
        <tissue>Venom gland</tissue>
    </source>
</reference>
<evidence type="ECO:0000250" key="1"/>
<evidence type="ECO:0000250" key="2">
    <source>
        <dbReference type="UniProtKB" id="P18619"/>
    </source>
</evidence>
<evidence type="ECO:0000255" key="3"/>
<evidence type="ECO:0000255" key="4">
    <source>
        <dbReference type="PROSITE-ProRule" id="PRU00068"/>
    </source>
</evidence>
<evidence type="ECO:0000255" key="5">
    <source>
        <dbReference type="PROSITE-ProRule" id="PRU00276"/>
    </source>
</evidence>
<evidence type="ECO:0000269" key="6">
    <source>
    </source>
</evidence>
<evidence type="ECO:0000305" key="7"/>
<evidence type="ECO:0000305" key="8">
    <source>
    </source>
</evidence>
<sequence>MIQVLLVTICLAVFPYQGSSIILESGNVDDYEVVYPQKVTALPKGAVQPKYEDAMQYEFKVNGEPVVLHLEKNKGLFSEDYSETHYSPDGREITTYPSVEDHCYHHGRVHNDADSTASISACDGLKGHFKLQGEMYLIEPLELSDSEAHAVFKYENVEKEDEAPKMCGVTQNWESDESIKKASQLYLTPEQQRFPQRHIELAIVVDHGMYTKYSSNFKKIRKRVHQMVSNINEMCRPLNIAITLSLLDVWSEKDLITVQADAPTTAGLFGDWRERVLLKKKNHDHAQLLTDINFTGDTIGWAYVGGMCNAKYSVGTVKDHSSNVFVVAVTMTHEIGHNLGMEHDDKDKCKCEACIMAPVISDKQSKLFSDCSKDYYQTFLTNKKPQCILNAPLRTDTVSTPISGNEFLEAGEECDCGSPSNPCCDVGTCKLSPGAQCADGLCCDQCRFKKKGKICRRARGDNPDDRCTGQSADCPRNGLYG</sequence>
<organism>
    <name type="scientific">Protobothrops jerdonii</name>
    <name type="common">Jerdon's pitviper</name>
    <name type="synonym">Trimeresurus jerdonii</name>
    <dbReference type="NCBI Taxonomy" id="242841"/>
    <lineage>
        <taxon>Eukaryota</taxon>
        <taxon>Metazoa</taxon>
        <taxon>Chordata</taxon>
        <taxon>Craniata</taxon>
        <taxon>Vertebrata</taxon>
        <taxon>Euteleostomi</taxon>
        <taxon>Lepidosauria</taxon>
        <taxon>Squamata</taxon>
        <taxon>Bifurcata</taxon>
        <taxon>Unidentata</taxon>
        <taxon>Episquamata</taxon>
        <taxon>Toxicofera</taxon>
        <taxon>Serpentes</taxon>
        <taxon>Colubroidea</taxon>
        <taxon>Viperidae</taxon>
        <taxon>Crotalinae</taxon>
        <taxon>Protobothrops</taxon>
    </lineage>
</organism>
<dbReference type="EC" id="3.4.24.-"/>
<dbReference type="EMBL" id="AY267902">
    <property type="protein sequence ID" value="AAP23053.1"/>
    <property type="molecule type" value="mRNA"/>
</dbReference>
<dbReference type="SMR" id="Q7ZZS9"/>
<dbReference type="MEROPS" id="M12.156"/>
<dbReference type="GO" id="GO:0005576">
    <property type="term" value="C:extracellular region"/>
    <property type="evidence" value="ECO:0007669"/>
    <property type="project" value="UniProtKB-SubCell"/>
</dbReference>
<dbReference type="GO" id="GO:0005886">
    <property type="term" value="C:plasma membrane"/>
    <property type="evidence" value="ECO:0007669"/>
    <property type="project" value="TreeGrafter"/>
</dbReference>
<dbReference type="GO" id="GO:0046872">
    <property type="term" value="F:metal ion binding"/>
    <property type="evidence" value="ECO:0007669"/>
    <property type="project" value="UniProtKB-KW"/>
</dbReference>
<dbReference type="GO" id="GO:0004222">
    <property type="term" value="F:metalloendopeptidase activity"/>
    <property type="evidence" value="ECO:0007669"/>
    <property type="project" value="InterPro"/>
</dbReference>
<dbReference type="GO" id="GO:0090729">
    <property type="term" value="F:toxin activity"/>
    <property type="evidence" value="ECO:0007669"/>
    <property type="project" value="UniProtKB-KW"/>
</dbReference>
<dbReference type="GO" id="GO:0006508">
    <property type="term" value="P:proteolysis"/>
    <property type="evidence" value="ECO:0007669"/>
    <property type="project" value="UniProtKB-KW"/>
</dbReference>
<dbReference type="CDD" id="cd04269">
    <property type="entry name" value="ZnMc_adamalysin_II_like"/>
    <property type="match status" value="1"/>
</dbReference>
<dbReference type="FunFam" id="3.40.390.10:FF:000002">
    <property type="entry name" value="Disintegrin and metalloproteinase domain-containing protein 22"/>
    <property type="match status" value="1"/>
</dbReference>
<dbReference type="FunFam" id="4.10.70.10:FF:000005">
    <property type="entry name" value="Zinc metalloproteinase/disintegrin"/>
    <property type="match status" value="1"/>
</dbReference>
<dbReference type="Gene3D" id="3.40.390.10">
    <property type="entry name" value="Collagenase (Catalytic Domain)"/>
    <property type="match status" value="1"/>
</dbReference>
<dbReference type="Gene3D" id="4.10.70.10">
    <property type="entry name" value="Disintegrin domain"/>
    <property type="match status" value="1"/>
</dbReference>
<dbReference type="InterPro" id="IPR018358">
    <property type="entry name" value="Disintegrin_CS"/>
</dbReference>
<dbReference type="InterPro" id="IPR001762">
    <property type="entry name" value="Disintegrin_dom"/>
</dbReference>
<dbReference type="InterPro" id="IPR036436">
    <property type="entry name" value="Disintegrin_dom_sf"/>
</dbReference>
<dbReference type="InterPro" id="IPR024079">
    <property type="entry name" value="MetalloPept_cat_dom_sf"/>
</dbReference>
<dbReference type="InterPro" id="IPR001590">
    <property type="entry name" value="Peptidase_M12B"/>
</dbReference>
<dbReference type="InterPro" id="IPR002870">
    <property type="entry name" value="Peptidase_M12B_N"/>
</dbReference>
<dbReference type="InterPro" id="IPR034027">
    <property type="entry name" value="Reprolysin_adamalysin"/>
</dbReference>
<dbReference type="PANTHER" id="PTHR11905">
    <property type="entry name" value="ADAM A DISINTEGRIN AND METALLOPROTEASE DOMAIN"/>
    <property type="match status" value="1"/>
</dbReference>
<dbReference type="PANTHER" id="PTHR11905:SF32">
    <property type="entry name" value="DISINTEGRIN AND METALLOPROTEINASE DOMAIN-CONTAINING PROTEIN 28"/>
    <property type="match status" value="1"/>
</dbReference>
<dbReference type="Pfam" id="PF00200">
    <property type="entry name" value="Disintegrin"/>
    <property type="match status" value="1"/>
</dbReference>
<dbReference type="Pfam" id="PF01562">
    <property type="entry name" value="Pep_M12B_propep"/>
    <property type="match status" value="1"/>
</dbReference>
<dbReference type="Pfam" id="PF01421">
    <property type="entry name" value="Reprolysin"/>
    <property type="match status" value="1"/>
</dbReference>
<dbReference type="PRINTS" id="PR00289">
    <property type="entry name" value="DISINTEGRIN"/>
</dbReference>
<dbReference type="SMART" id="SM00050">
    <property type="entry name" value="DISIN"/>
    <property type="match status" value="1"/>
</dbReference>
<dbReference type="SUPFAM" id="SSF57552">
    <property type="entry name" value="Blood coagulation inhibitor (disintegrin)"/>
    <property type="match status" value="1"/>
</dbReference>
<dbReference type="SUPFAM" id="SSF55486">
    <property type="entry name" value="Metalloproteases ('zincins'), catalytic domain"/>
    <property type="match status" value="1"/>
</dbReference>
<dbReference type="PROSITE" id="PS50215">
    <property type="entry name" value="ADAM_MEPRO"/>
    <property type="match status" value="1"/>
</dbReference>
<dbReference type="PROSITE" id="PS00427">
    <property type="entry name" value="DISINTEGRIN_1"/>
    <property type="match status" value="1"/>
</dbReference>
<dbReference type="PROSITE" id="PS50214">
    <property type="entry name" value="DISINTEGRIN_2"/>
    <property type="match status" value="1"/>
</dbReference>
<dbReference type="PROSITE" id="PS00142">
    <property type="entry name" value="ZINC_PROTEASE"/>
    <property type="match status" value="1"/>
</dbReference>
<protein>
    <recommendedName>
        <fullName>Zinc metalloproteinase/disintegrin</fullName>
    </recommendedName>
    <component>
        <recommendedName>
            <fullName>Snake venom metalloproteinase TJM-1</fullName>
            <shortName>SVMP</shortName>
            <ecNumber>3.4.24.-</ecNumber>
        </recommendedName>
    </component>
    <component>
        <recommendedName>
            <fullName>Disintegrin jerdonin</fullName>
        </recommendedName>
    </component>
</protein>
<name>VM2J_PROJR</name>
<feature type="signal peptide" evidence="3">
    <location>
        <begin position="1"/>
        <end position="20"/>
    </location>
</feature>
<feature type="propeptide" id="PRO_0000028973" evidence="1">
    <location>
        <begin position="21"/>
        <end position="190"/>
    </location>
</feature>
<feature type="chain" id="PRO_0000028974" description="Snake venom metalloproteinase TJM-1">
    <location>
        <begin position="191"/>
        <end position="392"/>
    </location>
</feature>
<feature type="propeptide" id="PRO_0000028975" evidence="6">
    <location>
        <begin position="393"/>
        <end position="410"/>
    </location>
</feature>
<feature type="chain" id="PRO_0000028976" description="Disintegrin jerdonin">
    <location>
        <begin position="411"/>
        <end position="481"/>
    </location>
</feature>
<feature type="domain" description="Peptidase M12B" evidence="5">
    <location>
        <begin position="197"/>
        <end position="392"/>
    </location>
</feature>
<feature type="domain" description="Disintegrin" evidence="4">
    <location>
        <begin position="400"/>
        <end position="481"/>
    </location>
</feature>
<feature type="short sequence motif" description="Cell attachment site">
    <location>
        <begin position="459"/>
        <end position="461"/>
    </location>
</feature>
<feature type="active site" evidence="5">
    <location>
        <position position="334"/>
    </location>
</feature>
<feature type="binding site" evidence="1">
    <location>
        <position position="200"/>
    </location>
    <ligand>
        <name>Ca(2+)</name>
        <dbReference type="ChEBI" id="CHEBI:29108"/>
    </ligand>
</feature>
<feature type="binding site" evidence="1">
    <location>
        <position position="284"/>
    </location>
    <ligand>
        <name>Ca(2+)</name>
        <dbReference type="ChEBI" id="CHEBI:29108"/>
    </ligand>
</feature>
<feature type="binding site" evidence="5">
    <location>
        <position position="333"/>
    </location>
    <ligand>
        <name>Zn(2+)</name>
        <dbReference type="ChEBI" id="CHEBI:29105"/>
        <note>catalytic</note>
    </ligand>
</feature>
<feature type="binding site" evidence="5">
    <location>
        <position position="337"/>
    </location>
    <ligand>
        <name>Zn(2+)</name>
        <dbReference type="ChEBI" id="CHEBI:29105"/>
        <note>catalytic</note>
    </ligand>
</feature>
<feature type="binding site" evidence="5">
    <location>
        <position position="343"/>
    </location>
    <ligand>
        <name>Zn(2+)</name>
        <dbReference type="ChEBI" id="CHEBI:29105"/>
        <note>catalytic</note>
    </ligand>
</feature>
<feature type="binding site" evidence="1">
    <location>
        <position position="387"/>
    </location>
    <ligand>
        <name>Ca(2+)</name>
        <dbReference type="ChEBI" id="CHEBI:29108"/>
    </ligand>
</feature>
<feature type="binding site" evidence="1">
    <location>
        <position position="390"/>
    </location>
    <ligand>
        <name>Ca(2+)</name>
        <dbReference type="ChEBI" id="CHEBI:29108"/>
    </ligand>
</feature>
<feature type="disulfide bond" evidence="5">
    <location>
        <begin position="308"/>
        <end position="387"/>
    </location>
</feature>
<feature type="disulfide bond" evidence="5">
    <location>
        <begin position="349"/>
        <end position="371"/>
    </location>
</feature>
<feature type="disulfide bond" evidence="5">
    <location>
        <begin position="351"/>
        <end position="354"/>
    </location>
</feature>
<feature type="disulfide bond" evidence="2">
    <location>
        <begin position="414"/>
        <end position="429"/>
    </location>
</feature>
<feature type="disulfide bond" evidence="2">
    <location>
        <begin position="416"/>
        <end position="424"/>
    </location>
</feature>
<feature type="disulfide bond" evidence="2">
    <location>
        <begin position="423"/>
        <end position="446"/>
    </location>
</feature>
<feature type="disulfide bond" evidence="2">
    <location>
        <begin position="437"/>
        <end position="443"/>
    </location>
</feature>
<feature type="disulfide bond" evidence="2">
    <location>
        <begin position="442"/>
        <end position="467"/>
    </location>
</feature>
<feature type="disulfide bond" evidence="2 4">
    <location>
        <begin position="455"/>
        <end position="474"/>
    </location>
</feature>